<comment type="function">
    <text>May be part of an oligomeric complex which is likely to have a transport or channel function in the erythrocyte membrane.</text>
</comment>
<comment type="subcellular location">
    <subcellularLocation>
        <location>Membrane</location>
        <topology>Multi-pass membrane protein</topology>
    </subcellularLocation>
</comment>
<comment type="similarity">
    <text evidence="2">Belongs to the ammonium transporter (TC 2.A.49) family. Rh subfamily.</text>
</comment>
<organism>
    <name type="scientific">Macaca fascicularis</name>
    <name type="common">Crab-eating macaque</name>
    <name type="synonym">Cynomolgus monkey</name>
    <dbReference type="NCBI Taxonomy" id="9541"/>
    <lineage>
        <taxon>Eukaryota</taxon>
        <taxon>Metazoa</taxon>
        <taxon>Chordata</taxon>
        <taxon>Craniata</taxon>
        <taxon>Vertebrata</taxon>
        <taxon>Euteleostomi</taxon>
        <taxon>Mammalia</taxon>
        <taxon>Eutheria</taxon>
        <taxon>Euarchontoglires</taxon>
        <taxon>Primates</taxon>
        <taxon>Haplorrhini</taxon>
        <taxon>Catarrhini</taxon>
        <taxon>Cercopithecidae</taxon>
        <taxon>Cercopithecinae</taxon>
        <taxon>Macaca</taxon>
    </lineage>
</organism>
<dbReference type="EMBL" id="L37054">
    <property type="protein sequence ID" value="AAA65628.1"/>
    <property type="molecule type" value="mRNA"/>
</dbReference>
<dbReference type="PIR" id="I84434">
    <property type="entry name" value="I84434"/>
</dbReference>
<dbReference type="SMR" id="Q28481"/>
<dbReference type="STRING" id="9541.ENSMFAP00000030303"/>
<dbReference type="eggNOG" id="KOG3796">
    <property type="taxonomic scope" value="Eukaryota"/>
</dbReference>
<dbReference type="Proteomes" id="UP000233100">
    <property type="component" value="Unplaced"/>
</dbReference>
<dbReference type="GO" id="GO:0005886">
    <property type="term" value="C:plasma membrane"/>
    <property type="evidence" value="ECO:0007669"/>
    <property type="project" value="InterPro"/>
</dbReference>
<dbReference type="GO" id="GO:0008519">
    <property type="term" value="F:ammonium channel activity"/>
    <property type="evidence" value="ECO:0007669"/>
    <property type="project" value="InterPro"/>
</dbReference>
<dbReference type="GO" id="GO:0097272">
    <property type="term" value="P:ammonium homeostasis"/>
    <property type="evidence" value="ECO:0007669"/>
    <property type="project" value="TreeGrafter"/>
</dbReference>
<dbReference type="FunFam" id="1.10.3430.10:FF:000009">
    <property type="entry name" value="Blood group Rh(D) polypeptide"/>
    <property type="match status" value="1"/>
</dbReference>
<dbReference type="Gene3D" id="1.10.3430.10">
    <property type="entry name" value="Ammonium transporter AmtB like domains"/>
    <property type="match status" value="1"/>
</dbReference>
<dbReference type="InterPro" id="IPR029020">
    <property type="entry name" value="Ammonium/urea_transptr"/>
</dbReference>
<dbReference type="InterPro" id="IPR024041">
    <property type="entry name" value="NH4_transpt_AmtB-like_dom"/>
</dbReference>
<dbReference type="InterPro" id="IPR002229">
    <property type="entry name" value="RhesusRHD"/>
</dbReference>
<dbReference type="PANTHER" id="PTHR11730">
    <property type="entry name" value="AMMONIUM TRANSPORTER"/>
    <property type="match status" value="1"/>
</dbReference>
<dbReference type="PANTHER" id="PTHR11730:SF43">
    <property type="entry name" value="BLOOD GROUP RH(CE) POLYPEPTIDE-RELATED"/>
    <property type="match status" value="1"/>
</dbReference>
<dbReference type="Pfam" id="PF00909">
    <property type="entry name" value="Ammonium_transp"/>
    <property type="match status" value="1"/>
</dbReference>
<dbReference type="PRINTS" id="PR00342">
    <property type="entry name" value="RHESUSRHD"/>
</dbReference>
<dbReference type="SUPFAM" id="SSF111352">
    <property type="entry name" value="Ammonium transporter"/>
    <property type="match status" value="1"/>
</dbReference>
<proteinExistence type="evidence at transcript level"/>
<evidence type="ECO:0000255" key="1"/>
<evidence type="ECO:0000305" key="2"/>
<accession>Q28481</accession>
<keyword id="KW-0472">Membrane</keyword>
<keyword id="KW-1185">Reference proteome</keyword>
<keyword id="KW-0812">Transmembrane</keyword>
<keyword id="KW-1133">Transmembrane helix</keyword>
<feature type="chain" id="PRO_0000168194" description="RH-like protein">
    <location>
        <begin position="1"/>
        <end position="417"/>
    </location>
</feature>
<feature type="transmembrane region" description="Helical" evidence="1">
    <location>
        <begin position="12"/>
        <end position="32"/>
    </location>
</feature>
<feature type="transmembrane region" description="Helical" evidence="1">
    <location>
        <begin position="44"/>
        <end position="64"/>
    </location>
</feature>
<feature type="transmembrane region" description="Helical" evidence="1">
    <location>
        <begin position="77"/>
        <end position="97"/>
    </location>
</feature>
<feature type="transmembrane region" description="Helical" evidence="1">
    <location>
        <begin position="125"/>
        <end position="145"/>
    </location>
</feature>
<feature type="transmembrane region" description="Helical" evidence="1">
    <location>
        <begin position="172"/>
        <end position="192"/>
    </location>
</feature>
<feature type="transmembrane region" description="Helical" evidence="1">
    <location>
        <begin position="203"/>
        <end position="223"/>
    </location>
</feature>
<feature type="transmembrane region" description="Helical" evidence="1">
    <location>
        <begin position="238"/>
        <end position="258"/>
    </location>
</feature>
<feature type="transmembrane region" description="Helical" evidence="1">
    <location>
        <begin position="265"/>
        <end position="285"/>
    </location>
</feature>
<feature type="transmembrane region" description="Helical" evidence="1">
    <location>
        <begin position="287"/>
        <end position="307"/>
    </location>
</feature>
<feature type="transmembrane region" description="Helical" evidence="1">
    <location>
        <begin position="331"/>
        <end position="351"/>
    </location>
</feature>
<feature type="transmembrane region" description="Helical" evidence="1">
    <location>
        <begin position="358"/>
        <end position="378"/>
    </location>
</feature>
<sequence>MSSKYPRSVRCCLPLWALTLEAALILLFFFFTYYDASLEDQKGLVASYQVCQDLTVMAVLGLGFFTSNLRRNSWSSVAFNLFLLALGVQWAILLDGFLSQFSPGKVVIKLFSIRLATRSTTSMLISMNAVLGKVNLAQLVVMELVELTVFGTMRIVIYNIFKIDYGMNMMHIHVFAAYFGLTVAWCLPKPLPKGTEDKYQTTTSPSLFAMLGTLFLWMFWPTFNSALLLNPIERKNAVFSTYYALAVSAVTAISVSSLAHPQRKINMTYMPNAGLAGGVAVGASCHVIHSPWIAMVLGLVAGLISFGGAKCLPVCFNRVLGIHESHSMHYTFGLPALLGEITYIVLMALRVFWASSNMIGFQVLLSTGTLSLAMAMSITSGLLTGLLLNLKIWKGPHVAKYFDDQAFWEFPHLAVGF</sequence>
<name>RHL_MACFA</name>
<protein>
    <recommendedName>
        <fullName>RH-like protein</fullName>
    </recommendedName>
    <alternativeName>
        <fullName>Rhesus-like protein</fullName>
    </alternativeName>
</protein>
<reference key="1">
    <citation type="journal article" date="1994" name="Biochem. Genet.">
        <title>Molecular genetics of chimpanzee Rh-related genes: their relationship with the R-C-E-F blood group system, the chimpanzee counterpart of the human rhesus system.</title>
        <authorList>
            <person name="Salvignol I."/>
            <person name="Blancher A."/>
            <person name="Calvas P."/>
            <person name="Clayton J."/>
            <person name="Socha W.W."/>
            <person name="Colin Y."/>
            <person name="Ruffie J."/>
        </authorList>
    </citation>
    <scope>NUCLEOTIDE SEQUENCE [MRNA]</scope>
    <source>
        <tissue>Bone marrow</tissue>
    </source>
</reference>